<gene>
    <name type="primary">ENOD40</name>
</gene>
<reference key="1">
    <citation type="journal article" date="1998" name="Plant Mol. Biol.">
        <title>Patterns of ENOD40 gene expression in stem-borne nodules of Sesbania rostrata.</title>
        <authorList>
            <person name="Corich V."/>
            <person name="Goormachtig S."/>
            <person name="Lievens S."/>
            <person name="van Montagu M."/>
            <person name="Holsters M."/>
        </authorList>
    </citation>
    <scope>NUCLEOTIDE SEQUENCE [MRNA]</scope>
    <source>
        <tissue>Stem nodule</tissue>
    </source>
</reference>
<dbReference type="EMBL" id="Y12714">
    <property type="protein sequence ID" value="CAA73252.1"/>
    <property type="molecule type" value="mRNA"/>
</dbReference>
<dbReference type="GO" id="GO:0009877">
    <property type="term" value="P:nodulation"/>
    <property type="evidence" value="ECO:0007669"/>
    <property type="project" value="UniProtKB-KW"/>
</dbReference>
<dbReference type="InterPro" id="IPR013186">
    <property type="entry name" value="ENOD40"/>
</dbReference>
<dbReference type="Pfam" id="PF08247">
    <property type="entry name" value="ENOD40"/>
    <property type="match status" value="1"/>
</dbReference>
<feature type="peptide" id="PRO_0000044079" description="Early nodulin-40">
    <location>
        <begin position="1"/>
        <end position="12"/>
    </location>
</feature>
<accession>O24369</accession>
<keyword id="KW-0536">Nodulation</keyword>
<comment type="function">
    <text evidence="1">Modulates the action of auxin, and may function as plant growth regulator that alters phytohormone responses.</text>
</comment>
<comment type="developmental stage">
    <text>Expressed in the early stages of the nodule development.</text>
</comment>
<organism>
    <name type="scientific">Sesbania rostrata</name>
    <dbReference type="NCBI Taxonomy" id="3895"/>
    <lineage>
        <taxon>Eukaryota</taxon>
        <taxon>Viridiplantae</taxon>
        <taxon>Streptophyta</taxon>
        <taxon>Embryophyta</taxon>
        <taxon>Tracheophyta</taxon>
        <taxon>Spermatophyta</taxon>
        <taxon>Magnoliopsida</taxon>
        <taxon>eudicotyledons</taxon>
        <taxon>Gunneridae</taxon>
        <taxon>Pentapetalae</taxon>
        <taxon>rosids</taxon>
        <taxon>fabids</taxon>
        <taxon>Fabales</taxon>
        <taxon>Fabaceae</taxon>
        <taxon>Papilionoideae</taxon>
        <taxon>50 kb inversion clade</taxon>
        <taxon>NPAAA clade</taxon>
        <taxon>Hologalegina</taxon>
        <taxon>robinioid clade</taxon>
        <taxon>Sesbanieae</taxon>
        <taxon>Sesbania</taxon>
    </lineage>
</organism>
<sequence length="12" mass="1418">MKLCWQKSIHGS</sequence>
<evidence type="ECO:0000250" key="1"/>
<protein>
    <recommendedName>
        <fullName>Early nodulin-40</fullName>
    </recommendedName>
</protein>
<proteinExistence type="evidence at transcript level"/>
<name>NO40_SESRO</name>